<organism>
    <name type="scientific">Wigglesworthia glossinidia brevipalpis</name>
    <dbReference type="NCBI Taxonomy" id="36870"/>
    <lineage>
        <taxon>Bacteria</taxon>
        <taxon>Pseudomonadati</taxon>
        <taxon>Pseudomonadota</taxon>
        <taxon>Gammaproteobacteria</taxon>
        <taxon>Enterobacterales</taxon>
        <taxon>Erwiniaceae</taxon>
        <taxon>Wigglesworthia</taxon>
    </lineage>
</organism>
<name>RPOC_WIGBR</name>
<feature type="chain" id="PRO_0000067833" description="DNA-directed RNA polymerase subunit beta'">
    <location>
        <begin position="1"/>
        <end position="1405"/>
    </location>
</feature>
<feature type="binding site" evidence="1">
    <location>
        <position position="70"/>
    </location>
    <ligand>
        <name>Zn(2+)</name>
        <dbReference type="ChEBI" id="CHEBI:29105"/>
        <label>1</label>
    </ligand>
</feature>
<feature type="binding site" evidence="1">
    <location>
        <position position="72"/>
    </location>
    <ligand>
        <name>Zn(2+)</name>
        <dbReference type="ChEBI" id="CHEBI:29105"/>
        <label>1</label>
    </ligand>
</feature>
<feature type="binding site" evidence="1">
    <location>
        <position position="85"/>
    </location>
    <ligand>
        <name>Zn(2+)</name>
        <dbReference type="ChEBI" id="CHEBI:29105"/>
        <label>1</label>
    </ligand>
</feature>
<feature type="binding site" evidence="1">
    <location>
        <position position="88"/>
    </location>
    <ligand>
        <name>Zn(2+)</name>
        <dbReference type="ChEBI" id="CHEBI:29105"/>
        <label>1</label>
    </ligand>
</feature>
<feature type="binding site" evidence="1">
    <location>
        <position position="460"/>
    </location>
    <ligand>
        <name>Mg(2+)</name>
        <dbReference type="ChEBI" id="CHEBI:18420"/>
    </ligand>
</feature>
<feature type="binding site" evidence="1">
    <location>
        <position position="462"/>
    </location>
    <ligand>
        <name>Mg(2+)</name>
        <dbReference type="ChEBI" id="CHEBI:18420"/>
    </ligand>
</feature>
<feature type="binding site" evidence="1">
    <location>
        <position position="464"/>
    </location>
    <ligand>
        <name>Mg(2+)</name>
        <dbReference type="ChEBI" id="CHEBI:18420"/>
    </ligand>
</feature>
<feature type="binding site" evidence="1">
    <location>
        <position position="814"/>
    </location>
    <ligand>
        <name>Zn(2+)</name>
        <dbReference type="ChEBI" id="CHEBI:29105"/>
        <label>2</label>
    </ligand>
</feature>
<feature type="binding site" evidence="1">
    <location>
        <position position="888"/>
    </location>
    <ligand>
        <name>Zn(2+)</name>
        <dbReference type="ChEBI" id="CHEBI:29105"/>
        <label>2</label>
    </ligand>
</feature>
<feature type="binding site" evidence="1">
    <location>
        <position position="895"/>
    </location>
    <ligand>
        <name>Zn(2+)</name>
        <dbReference type="ChEBI" id="CHEBI:29105"/>
        <label>2</label>
    </ligand>
</feature>
<feature type="binding site" evidence="1">
    <location>
        <position position="898"/>
    </location>
    <ligand>
        <name>Zn(2+)</name>
        <dbReference type="ChEBI" id="CHEBI:29105"/>
        <label>2</label>
    </ligand>
</feature>
<sequence length="1405" mass="157285">MKDLLRFLKTNNKIEEFDTIKISLASPEIVRSWSFGEIKKPETINYRTFKPERDGLFCARIFGPVKDYECLCGKYKRLKHRGVICEKCGVEVTQTKVRRERMGHIELASPTAHIWFLKSLPSRIGLLLDMPLRDIERVLYFESYVVTDGGMTSLNQRQILTEEQYLDSLEEFGDEFDAKMGAEAIQEILKNMNLKETCNNIRKELIDTNSETKRKKLTKRVKLIESFIKSGNKPEWMILTVLPVLPPDLRPLVPLDGGRFATSDLNDLYRRVINRNNRLKRLLDLAAPDIIVRNEKRMLQEAVDALLDNGRRGRAITGSNKRPLKSLADMIKGKQGRFRQNLLGKRVDYSGRSVITVGPYLRLHQCGLPKKMALELFKPFIYGKLEINGFATTIKAAKKMVEREESVVWDILEEVIKEHPVMLNRAPTLHRLGIQAFEPILIEGKAIQLHPLVCAAYNADFDGDQMAVHVPLTLEAQLEARALMMSTNNILSPANGEPIIVPSQDVVLGLYYMTRDRINCLGEGMCLSNPKEAEHLYRSGIAELHAKVKVRISEYNILENKNIVKSVKLIDTTIGRSILWMIVPKGLPFSLVNRVLGKKSISNMLNTCYRVLGLKPTVMFADNIMYTGFSYAAKSGSSVGIDDILIPLKKSKIIKNAEYEVSEIQEQFQSGLVTAGERYNKVIDIWASANERVAKAMMKNLSVETIIDGNGKENKQSSFNNIFMMADSGARGSAAQIRQLAGMRGLMAKPDGSIIETPITANFREGLNVLQYFISTHGARKGLADTALKTANSGYLTRRLVDVAQDLVVTEDDCKTIFGITMTPVIEGGEVKEPLRERVLGRVVAENVMNPGTDTVLVHRNTLLSEKWCNFLEKNLIDKIKVRSVVTCETNFGVCAKCYGRDLARGHLVNKGEAIGVIAAQSIGEPGTQLTMRTFHIGGAASRLASESNIQVKNKGIVKLNNAKFVINENNKIVITSRHASLKIIDEFGRTKEKYKLPYGAFVNKKNGETITSGEVIANWDPHTMPIITEVSGYIRFIDIIENQTITRQTDELTGVSFISVLDTSERIGINKDLRPALKIINLQGKDVFLPGTDIPAQYFLPGKSILQLENGTKINSGDVLARLSLETSGIKDITGGLPRVADLFEARRPKEPAILAEISGIISFGKETKGKRRLVISPINGSDVYEEMIPKWRHLNVFEGERVEKGDVISDGPESPHDILRLRGVHAVTKYIVNEVQDVYRLQGVKINDKHIEVIVRQMLKKATILNGSQSEFLEGEQTEFSRIRIANNNTKSSDKINYSRDLLGITKSSLATESFISAASFQETTRVLTESAVSGKIDELRGLKENVIVGRLIPAGTGYSYHQKRLLERKKRNSIHKSSVNHVTLDEASENLKELLKANLNDN</sequence>
<comment type="function">
    <text evidence="1">DNA-dependent RNA polymerase catalyzes the transcription of DNA into RNA using the four ribonucleoside triphosphates as substrates.</text>
</comment>
<comment type="catalytic activity">
    <reaction evidence="1">
        <text>RNA(n) + a ribonucleoside 5'-triphosphate = RNA(n+1) + diphosphate</text>
        <dbReference type="Rhea" id="RHEA:21248"/>
        <dbReference type="Rhea" id="RHEA-COMP:14527"/>
        <dbReference type="Rhea" id="RHEA-COMP:17342"/>
        <dbReference type="ChEBI" id="CHEBI:33019"/>
        <dbReference type="ChEBI" id="CHEBI:61557"/>
        <dbReference type="ChEBI" id="CHEBI:140395"/>
        <dbReference type="EC" id="2.7.7.6"/>
    </reaction>
</comment>
<comment type="cofactor">
    <cofactor evidence="1">
        <name>Mg(2+)</name>
        <dbReference type="ChEBI" id="CHEBI:18420"/>
    </cofactor>
    <text evidence="1">Binds 1 Mg(2+) ion per subunit.</text>
</comment>
<comment type="cofactor">
    <cofactor evidence="1">
        <name>Zn(2+)</name>
        <dbReference type="ChEBI" id="CHEBI:29105"/>
    </cofactor>
    <text evidence="1">Binds 2 Zn(2+) ions per subunit.</text>
</comment>
<comment type="subunit">
    <text evidence="1">The RNAP catalytic core consists of 2 alpha, 1 beta, 1 beta' and 1 omega subunit. When a sigma factor is associated with the core the holoenzyme is formed, which can initiate transcription.</text>
</comment>
<comment type="similarity">
    <text evidence="1">Belongs to the RNA polymerase beta' chain family.</text>
</comment>
<accession>Q8D232</accession>
<gene>
    <name evidence="1" type="primary">rpoC</name>
    <name type="ordered locus">WIGBR5230</name>
</gene>
<reference key="1">
    <citation type="journal article" date="2002" name="Nat. Genet.">
        <title>Genome sequence of the endocellular obligate symbiont of tsetse flies, Wigglesworthia glossinidia.</title>
        <authorList>
            <person name="Akman L."/>
            <person name="Yamashita A."/>
            <person name="Watanabe H."/>
            <person name="Oshima K."/>
            <person name="Shiba T."/>
            <person name="Hattori M."/>
            <person name="Aksoy S."/>
        </authorList>
    </citation>
    <scope>NUCLEOTIDE SEQUENCE [LARGE SCALE GENOMIC DNA]</scope>
</reference>
<dbReference type="EC" id="2.7.7.6" evidence="1"/>
<dbReference type="EMBL" id="BA000021">
    <property type="protein sequence ID" value="BAC24669.1"/>
    <property type="molecule type" value="Genomic_DNA"/>
</dbReference>
<dbReference type="SMR" id="Q8D232"/>
<dbReference type="STRING" id="36870.gene:10369031"/>
<dbReference type="KEGG" id="wbr:rpoC"/>
<dbReference type="eggNOG" id="COG0086">
    <property type="taxonomic scope" value="Bacteria"/>
</dbReference>
<dbReference type="HOGENOM" id="CLU_000524_3_1_6"/>
<dbReference type="OrthoDB" id="9815296at2"/>
<dbReference type="Proteomes" id="UP000000562">
    <property type="component" value="Chromosome"/>
</dbReference>
<dbReference type="GO" id="GO:0000428">
    <property type="term" value="C:DNA-directed RNA polymerase complex"/>
    <property type="evidence" value="ECO:0007669"/>
    <property type="project" value="UniProtKB-KW"/>
</dbReference>
<dbReference type="GO" id="GO:0003677">
    <property type="term" value="F:DNA binding"/>
    <property type="evidence" value="ECO:0007669"/>
    <property type="project" value="UniProtKB-UniRule"/>
</dbReference>
<dbReference type="GO" id="GO:0003899">
    <property type="term" value="F:DNA-directed RNA polymerase activity"/>
    <property type="evidence" value="ECO:0007669"/>
    <property type="project" value="UniProtKB-UniRule"/>
</dbReference>
<dbReference type="GO" id="GO:0000287">
    <property type="term" value="F:magnesium ion binding"/>
    <property type="evidence" value="ECO:0007669"/>
    <property type="project" value="UniProtKB-UniRule"/>
</dbReference>
<dbReference type="GO" id="GO:0008270">
    <property type="term" value="F:zinc ion binding"/>
    <property type="evidence" value="ECO:0007669"/>
    <property type="project" value="UniProtKB-UniRule"/>
</dbReference>
<dbReference type="GO" id="GO:0006351">
    <property type="term" value="P:DNA-templated transcription"/>
    <property type="evidence" value="ECO:0007669"/>
    <property type="project" value="UniProtKB-UniRule"/>
</dbReference>
<dbReference type="CDD" id="cd02655">
    <property type="entry name" value="RNAP_beta'_C"/>
    <property type="match status" value="1"/>
</dbReference>
<dbReference type="CDD" id="cd01609">
    <property type="entry name" value="RNAP_beta'_N"/>
    <property type="match status" value="1"/>
</dbReference>
<dbReference type="FunFam" id="1.10.132.30:FF:000003">
    <property type="entry name" value="DNA-directed RNA polymerase subunit beta"/>
    <property type="match status" value="1"/>
</dbReference>
<dbReference type="FunFam" id="1.10.150.390:FF:000002">
    <property type="entry name" value="DNA-directed RNA polymerase subunit beta"/>
    <property type="match status" value="1"/>
</dbReference>
<dbReference type="FunFam" id="1.10.40.90:FF:000001">
    <property type="entry name" value="DNA-directed RNA polymerase subunit beta"/>
    <property type="match status" value="1"/>
</dbReference>
<dbReference type="FunFam" id="2.40.50.100:FF:000012">
    <property type="entry name" value="DNA-directed RNA polymerase subunit beta"/>
    <property type="match status" value="1"/>
</dbReference>
<dbReference type="FunFam" id="4.10.860.120:FF:000001">
    <property type="entry name" value="DNA-directed RNA polymerase subunit beta"/>
    <property type="match status" value="1"/>
</dbReference>
<dbReference type="Gene3D" id="1.10.132.30">
    <property type="match status" value="1"/>
</dbReference>
<dbReference type="Gene3D" id="1.10.150.390">
    <property type="match status" value="1"/>
</dbReference>
<dbReference type="Gene3D" id="1.10.1790.20">
    <property type="match status" value="1"/>
</dbReference>
<dbReference type="Gene3D" id="1.10.40.90">
    <property type="match status" value="1"/>
</dbReference>
<dbReference type="Gene3D" id="2.40.40.20">
    <property type="match status" value="1"/>
</dbReference>
<dbReference type="Gene3D" id="2.40.50.100">
    <property type="match status" value="3"/>
</dbReference>
<dbReference type="Gene3D" id="4.10.860.120">
    <property type="entry name" value="RNA polymerase II, clamp domain"/>
    <property type="match status" value="1"/>
</dbReference>
<dbReference type="Gene3D" id="1.10.274.100">
    <property type="entry name" value="RNA polymerase Rpb1, domain 3"/>
    <property type="match status" value="1"/>
</dbReference>
<dbReference type="HAMAP" id="MF_01322">
    <property type="entry name" value="RNApol_bact_RpoC"/>
    <property type="match status" value="1"/>
</dbReference>
<dbReference type="InterPro" id="IPR045867">
    <property type="entry name" value="DNA-dir_RpoC_beta_prime"/>
</dbReference>
<dbReference type="InterPro" id="IPR012754">
    <property type="entry name" value="DNA-dir_RpoC_beta_prime_bact"/>
</dbReference>
<dbReference type="InterPro" id="IPR000722">
    <property type="entry name" value="RNA_pol_asu"/>
</dbReference>
<dbReference type="InterPro" id="IPR006592">
    <property type="entry name" value="RNA_pol_N"/>
</dbReference>
<dbReference type="InterPro" id="IPR007080">
    <property type="entry name" value="RNA_pol_Rpb1_1"/>
</dbReference>
<dbReference type="InterPro" id="IPR007066">
    <property type="entry name" value="RNA_pol_Rpb1_3"/>
</dbReference>
<dbReference type="InterPro" id="IPR042102">
    <property type="entry name" value="RNA_pol_Rpb1_3_sf"/>
</dbReference>
<dbReference type="InterPro" id="IPR007083">
    <property type="entry name" value="RNA_pol_Rpb1_4"/>
</dbReference>
<dbReference type="InterPro" id="IPR007081">
    <property type="entry name" value="RNA_pol_Rpb1_5"/>
</dbReference>
<dbReference type="InterPro" id="IPR044893">
    <property type="entry name" value="RNA_pol_Rpb1_clamp_domain"/>
</dbReference>
<dbReference type="InterPro" id="IPR038120">
    <property type="entry name" value="Rpb1_funnel_sf"/>
</dbReference>
<dbReference type="NCBIfam" id="TIGR02386">
    <property type="entry name" value="rpoC_TIGR"/>
    <property type="match status" value="1"/>
</dbReference>
<dbReference type="PANTHER" id="PTHR19376">
    <property type="entry name" value="DNA-DIRECTED RNA POLYMERASE"/>
    <property type="match status" value="1"/>
</dbReference>
<dbReference type="PANTHER" id="PTHR19376:SF54">
    <property type="entry name" value="DNA-DIRECTED RNA POLYMERASE SUBUNIT BETA"/>
    <property type="match status" value="1"/>
</dbReference>
<dbReference type="Pfam" id="PF04997">
    <property type="entry name" value="RNA_pol_Rpb1_1"/>
    <property type="match status" value="1"/>
</dbReference>
<dbReference type="Pfam" id="PF00623">
    <property type="entry name" value="RNA_pol_Rpb1_2"/>
    <property type="match status" value="1"/>
</dbReference>
<dbReference type="Pfam" id="PF04983">
    <property type="entry name" value="RNA_pol_Rpb1_3"/>
    <property type="match status" value="1"/>
</dbReference>
<dbReference type="Pfam" id="PF05000">
    <property type="entry name" value="RNA_pol_Rpb1_4"/>
    <property type="match status" value="1"/>
</dbReference>
<dbReference type="Pfam" id="PF04998">
    <property type="entry name" value="RNA_pol_Rpb1_5"/>
    <property type="match status" value="1"/>
</dbReference>
<dbReference type="SMART" id="SM00663">
    <property type="entry name" value="RPOLA_N"/>
    <property type="match status" value="1"/>
</dbReference>
<dbReference type="SUPFAM" id="SSF64484">
    <property type="entry name" value="beta and beta-prime subunits of DNA dependent RNA-polymerase"/>
    <property type="match status" value="1"/>
</dbReference>
<protein>
    <recommendedName>
        <fullName evidence="1">DNA-directed RNA polymerase subunit beta'</fullName>
        <shortName evidence="1">RNAP subunit beta'</shortName>
        <ecNumber evidence="1">2.7.7.6</ecNumber>
    </recommendedName>
    <alternativeName>
        <fullName evidence="1">RNA polymerase subunit beta'</fullName>
    </alternativeName>
    <alternativeName>
        <fullName evidence="1">Transcriptase subunit beta'</fullName>
    </alternativeName>
</protein>
<keyword id="KW-0240">DNA-directed RNA polymerase</keyword>
<keyword id="KW-0460">Magnesium</keyword>
<keyword id="KW-0479">Metal-binding</keyword>
<keyword id="KW-0548">Nucleotidyltransferase</keyword>
<keyword id="KW-1185">Reference proteome</keyword>
<keyword id="KW-0804">Transcription</keyword>
<keyword id="KW-0808">Transferase</keyword>
<keyword id="KW-0862">Zinc</keyword>
<evidence type="ECO:0000255" key="1">
    <source>
        <dbReference type="HAMAP-Rule" id="MF_01322"/>
    </source>
</evidence>
<proteinExistence type="inferred from homology"/>